<proteinExistence type="inferred from homology"/>
<name>GRPE_BACFR</name>
<accession>Q64VI6</accession>
<sequence length="195" mass="21963">MDPKEKKTKQEEELKVDDIQDTVEGQSQNEEATEATEPLTAEEKLEKELKEAQAQIEDQKDKYLRLSAEFDNYRKRTVKEKAELILNGGEKSIKSILPVIDDMERALTTMETATDVNAVKEGVELIYNKFLSILSQDGVKVIETKDQPLDTDYHEAIAVIPAPTEEQKGKILDCVQTGYTLNGKVIRHAKVVVGE</sequence>
<protein>
    <recommendedName>
        <fullName evidence="1">Protein GrpE</fullName>
    </recommendedName>
    <alternativeName>
        <fullName evidence="1">HSP-70 cofactor</fullName>
    </alternativeName>
</protein>
<reference key="1">
    <citation type="journal article" date="2004" name="Proc. Natl. Acad. Sci. U.S.A.">
        <title>Genomic analysis of Bacteroides fragilis reveals extensive DNA inversions regulating cell surface adaptation.</title>
        <authorList>
            <person name="Kuwahara T."/>
            <person name="Yamashita A."/>
            <person name="Hirakawa H."/>
            <person name="Nakayama H."/>
            <person name="Toh H."/>
            <person name="Okada N."/>
            <person name="Kuhara S."/>
            <person name="Hattori M."/>
            <person name="Hayashi T."/>
            <person name="Ohnishi Y."/>
        </authorList>
    </citation>
    <scope>NUCLEOTIDE SEQUENCE [LARGE SCALE GENOMIC DNA]</scope>
    <source>
        <strain>YCH46</strain>
    </source>
</reference>
<comment type="function">
    <text evidence="1">Participates actively in the response to hyperosmotic and heat shock by preventing the aggregation of stress-denatured proteins, in association with DnaK and GrpE. It is the nucleotide exchange factor for DnaK and may function as a thermosensor. Unfolded proteins bind initially to DnaJ; upon interaction with the DnaJ-bound protein, DnaK hydrolyzes its bound ATP, resulting in the formation of a stable complex. GrpE releases ADP from DnaK; ATP binding to DnaK triggers the release of the substrate protein, thus completing the reaction cycle. Several rounds of ATP-dependent interactions between DnaJ, DnaK and GrpE are required for fully efficient folding.</text>
</comment>
<comment type="subunit">
    <text evidence="1">Homodimer.</text>
</comment>
<comment type="subcellular location">
    <subcellularLocation>
        <location evidence="1">Cytoplasm</location>
    </subcellularLocation>
</comment>
<comment type="similarity">
    <text evidence="1">Belongs to the GrpE family.</text>
</comment>
<dbReference type="EMBL" id="AP006841">
    <property type="protein sequence ID" value="BAD48490.1"/>
    <property type="molecule type" value="Genomic_DNA"/>
</dbReference>
<dbReference type="RefSeq" id="WP_005800555.1">
    <property type="nucleotide sequence ID" value="NZ_UYXF01000005.1"/>
</dbReference>
<dbReference type="RefSeq" id="YP_099024.1">
    <property type="nucleotide sequence ID" value="NC_006347.1"/>
</dbReference>
<dbReference type="SMR" id="Q64VI6"/>
<dbReference type="STRING" id="295405.BF1743"/>
<dbReference type="KEGG" id="bfr:BF1743"/>
<dbReference type="PATRIC" id="fig|295405.11.peg.1692"/>
<dbReference type="HOGENOM" id="CLU_057217_5_2_10"/>
<dbReference type="OrthoDB" id="9812586at2"/>
<dbReference type="Proteomes" id="UP000002197">
    <property type="component" value="Chromosome"/>
</dbReference>
<dbReference type="GO" id="GO:0005737">
    <property type="term" value="C:cytoplasm"/>
    <property type="evidence" value="ECO:0007669"/>
    <property type="project" value="UniProtKB-SubCell"/>
</dbReference>
<dbReference type="GO" id="GO:0000774">
    <property type="term" value="F:adenyl-nucleotide exchange factor activity"/>
    <property type="evidence" value="ECO:0007669"/>
    <property type="project" value="InterPro"/>
</dbReference>
<dbReference type="GO" id="GO:0042803">
    <property type="term" value="F:protein homodimerization activity"/>
    <property type="evidence" value="ECO:0007669"/>
    <property type="project" value="InterPro"/>
</dbReference>
<dbReference type="GO" id="GO:0051087">
    <property type="term" value="F:protein-folding chaperone binding"/>
    <property type="evidence" value="ECO:0007669"/>
    <property type="project" value="InterPro"/>
</dbReference>
<dbReference type="GO" id="GO:0051082">
    <property type="term" value="F:unfolded protein binding"/>
    <property type="evidence" value="ECO:0007669"/>
    <property type="project" value="TreeGrafter"/>
</dbReference>
<dbReference type="GO" id="GO:0006457">
    <property type="term" value="P:protein folding"/>
    <property type="evidence" value="ECO:0007669"/>
    <property type="project" value="InterPro"/>
</dbReference>
<dbReference type="CDD" id="cd00446">
    <property type="entry name" value="GrpE"/>
    <property type="match status" value="1"/>
</dbReference>
<dbReference type="Gene3D" id="3.90.20.20">
    <property type="match status" value="1"/>
</dbReference>
<dbReference type="Gene3D" id="2.30.22.10">
    <property type="entry name" value="Head domain of nucleotide exchange factor GrpE"/>
    <property type="match status" value="1"/>
</dbReference>
<dbReference type="HAMAP" id="MF_01151">
    <property type="entry name" value="GrpE"/>
    <property type="match status" value="1"/>
</dbReference>
<dbReference type="InterPro" id="IPR000740">
    <property type="entry name" value="GrpE"/>
</dbReference>
<dbReference type="InterPro" id="IPR013805">
    <property type="entry name" value="GrpE_coiled_coil"/>
</dbReference>
<dbReference type="InterPro" id="IPR009012">
    <property type="entry name" value="GrpE_head"/>
</dbReference>
<dbReference type="PANTHER" id="PTHR21237">
    <property type="entry name" value="GRPE PROTEIN"/>
    <property type="match status" value="1"/>
</dbReference>
<dbReference type="PANTHER" id="PTHR21237:SF23">
    <property type="entry name" value="GRPE PROTEIN HOMOLOG, MITOCHONDRIAL"/>
    <property type="match status" value="1"/>
</dbReference>
<dbReference type="Pfam" id="PF01025">
    <property type="entry name" value="GrpE"/>
    <property type="match status" value="1"/>
</dbReference>
<dbReference type="PRINTS" id="PR00773">
    <property type="entry name" value="GRPEPROTEIN"/>
</dbReference>
<dbReference type="SUPFAM" id="SSF58014">
    <property type="entry name" value="Coiled-coil domain of nucleotide exchange factor GrpE"/>
    <property type="match status" value="1"/>
</dbReference>
<dbReference type="SUPFAM" id="SSF51064">
    <property type="entry name" value="Head domain of nucleotide exchange factor GrpE"/>
    <property type="match status" value="1"/>
</dbReference>
<organism>
    <name type="scientific">Bacteroides fragilis (strain YCH46)</name>
    <dbReference type="NCBI Taxonomy" id="295405"/>
    <lineage>
        <taxon>Bacteria</taxon>
        <taxon>Pseudomonadati</taxon>
        <taxon>Bacteroidota</taxon>
        <taxon>Bacteroidia</taxon>
        <taxon>Bacteroidales</taxon>
        <taxon>Bacteroidaceae</taxon>
        <taxon>Bacteroides</taxon>
    </lineage>
</organism>
<feature type="chain" id="PRO_1000053541" description="Protein GrpE">
    <location>
        <begin position="1"/>
        <end position="195"/>
    </location>
</feature>
<feature type="region of interest" description="Disordered" evidence="2">
    <location>
        <begin position="1"/>
        <end position="41"/>
    </location>
</feature>
<feature type="compositionally biased region" description="Basic and acidic residues" evidence="2">
    <location>
        <begin position="1"/>
        <end position="18"/>
    </location>
</feature>
<keyword id="KW-0143">Chaperone</keyword>
<keyword id="KW-0963">Cytoplasm</keyword>
<keyword id="KW-0346">Stress response</keyword>
<evidence type="ECO:0000255" key="1">
    <source>
        <dbReference type="HAMAP-Rule" id="MF_01151"/>
    </source>
</evidence>
<evidence type="ECO:0000256" key="2">
    <source>
        <dbReference type="SAM" id="MobiDB-lite"/>
    </source>
</evidence>
<gene>
    <name evidence="1" type="primary">grpE</name>
    <name type="ordered locus">BF1743</name>
</gene>